<protein>
    <recommendedName>
        <fullName>Type IV secretion system protein PtlI</fullName>
    </recommendedName>
    <alternativeName>
        <fullName>Pertussis toxin liberation protein I</fullName>
    </alternativeName>
</protein>
<keyword id="KW-1185">Reference proteome</keyword>
<keyword id="KW-0732">Signal</keyword>
<keyword id="KW-0813">Transport</keyword>
<name>PTLI_BORPE</name>
<evidence type="ECO:0000255" key="1"/>
<evidence type="ECO:0000256" key="2">
    <source>
        <dbReference type="SAM" id="MobiDB-lite"/>
    </source>
</evidence>
<evidence type="ECO:0000269" key="3">
    <source>
    </source>
</evidence>
<evidence type="ECO:0000269" key="4">
    <source>
    </source>
</evidence>
<evidence type="ECO:0000269" key="5">
    <source>
    </source>
</evidence>
<proteinExistence type="evidence at protein level"/>
<feature type="signal peptide" evidence="1">
    <location>
        <begin position="1"/>
        <end position="25"/>
    </location>
</feature>
<feature type="chain" id="PRO_0000262580" description="Type IV secretion system protein PtlI">
    <location>
        <begin position="26"/>
        <end position="61"/>
    </location>
</feature>
<feature type="region of interest" description="Disordered" evidence="2">
    <location>
        <begin position="37"/>
        <end position="61"/>
    </location>
</feature>
<feature type="compositionally biased region" description="Polar residues" evidence="2">
    <location>
        <begin position="52"/>
        <end position="61"/>
    </location>
</feature>
<accession>Q7VSX7</accession>
<comment type="function">
    <text evidence="3 4 5">Component of the type IV secretion system ptl required for secretion of assembled pertussis toxin (PTX) through the outer membrane.</text>
</comment>
<comment type="subunit">
    <text>Forms a complex with PtlF.</text>
</comment>
<comment type="induction">
    <text>Cotranscribed with ptxABCDE. Activated by the two-component regulatory system BvgS/BvgA.</text>
</comment>
<gene>
    <name type="primary">ptlI</name>
    <name type="ordered locus">BP3792</name>
</gene>
<sequence>MIHAHSNARLLRWAILAIAPVTLGACAPNGPPGLPYPDGKPLIPINTAAPEQGSSCQTRAP</sequence>
<reference key="1">
    <citation type="journal article" date="1993" name="Proc. Natl. Acad. Sci. U.S.A.">
        <title>Molecular characterization of an operon required for pertussis toxin secretion.</title>
        <authorList>
            <person name="Weiss A.A."/>
            <person name="Johnson F.D."/>
            <person name="Burns D.L."/>
        </authorList>
    </citation>
    <scope>NUCLEOTIDE SEQUENCE [GENOMIC DNA]</scope>
    <scope>FUNCTION</scope>
    <source>
        <strain>Tohama I / BP338</strain>
    </source>
</reference>
<reference key="2">
    <citation type="journal article" date="2003" name="Nat. Genet.">
        <title>Comparative analysis of the genome sequences of Bordetella pertussis, Bordetella parapertussis and Bordetella bronchiseptica.</title>
        <authorList>
            <person name="Parkhill J."/>
            <person name="Sebaihia M."/>
            <person name="Preston A."/>
            <person name="Murphy L.D."/>
            <person name="Thomson N.R."/>
            <person name="Harris D.E."/>
            <person name="Holden M.T.G."/>
            <person name="Churcher C.M."/>
            <person name="Bentley S.D."/>
            <person name="Mungall K.L."/>
            <person name="Cerdeno-Tarraga A.-M."/>
            <person name="Temple L."/>
            <person name="James K.D."/>
            <person name="Harris B."/>
            <person name="Quail M.A."/>
            <person name="Achtman M."/>
            <person name="Atkin R."/>
            <person name="Baker S."/>
            <person name="Basham D."/>
            <person name="Bason N."/>
            <person name="Cherevach I."/>
            <person name="Chillingworth T."/>
            <person name="Collins M."/>
            <person name="Cronin A."/>
            <person name="Davis P."/>
            <person name="Doggett J."/>
            <person name="Feltwell T."/>
            <person name="Goble A."/>
            <person name="Hamlin N."/>
            <person name="Hauser H."/>
            <person name="Holroyd S."/>
            <person name="Jagels K."/>
            <person name="Leather S."/>
            <person name="Moule S."/>
            <person name="Norberczak H."/>
            <person name="O'Neil S."/>
            <person name="Ormond D."/>
            <person name="Price C."/>
            <person name="Rabbinowitsch E."/>
            <person name="Rutter S."/>
            <person name="Sanders M."/>
            <person name="Saunders D."/>
            <person name="Seeger K."/>
            <person name="Sharp S."/>
            <person name="Simmonds M."/>
            <person name="Skelton J."/>
            <person name="Squares R."/>
            <person name="Squares S."/>
            <person name="Stevens K."/>
            <person name="Unwin L."/>
            <person name="Whitehead S."/>
            <person name="Barrell B.G."/>
            <person name="Maskell D.J."/>
        </authorList>
    </citation>
    <scope>NUCLEOTIDE SEQUENCE [LARGE SCALE GENOMIC DNA]</scope>
    <source>
        <strain>Tohama I / ATCC BAA-589 / NCTC 13251</strain>
    </source>
</reference>
<reference key="3">
    <citation type="journal article" date="1995" name="J. Bacteriol.">
        <title>Synergistic binding of RNA polymerase and BvgA phosphate to the pertussis toxin promoter of Bordetella pertussis.</title>
        <authorList>
            <person name="Boucher P.E."/>
            <person name="Stibitz S."/>
        </authorList>
    </citation>
    <scope>REGULATION BY BVGS/BVGA</scope>
    <source>
        <strain>Tohama I / ATCC BAA-589 / NCTC 13251</strain>
    </source>
</reference>
<reference key="4">
    <citation type="journal article" date="1996" name="Infect. Immun.">
        <title>The pertussis toxin liberation genes of Bordetella pertussis are transcriptionally linked to the pertussis toxin operon.</title>
        <authorList>
            <person name="Ricci S."/>
            <person name="Rappuoli R."/>
            <person name="Scarlato V."/>
        </authorList>
    </citation>
    <scope>COTRANSCRIPTION WITH PTX</scope>
    <source>
        <strain>Wellcome 28</strain>
    </source>
</reference>
<reference key="5">
    <citation type="journal article" date="1996" name="J. Biol. Chem.">
        <title>Evidence for a ninth gene, ptlI, in the locus encoding the pertussis toxin secretion system of Bordetella pertussis and formation of a PtlI-PtlF complex.</title>
        <authorList>
            <person name="Farizo K.M."/>
            <person name="Cafarella T.G."/>
            <person name="Burns D.L."/>
        </authorList>
    </citation>
    <scope>IDENTIFICATION OF PTLI</scope>
    <scope>INTERACTION WITH PTLF</scope>
    <source>
        <strain>Tohama I / BP338</strain>
    </source>
</reference>
<reference key="6">
    <citation type="journal article" date="1999" name="FEMS Microbiol. Lett.">
        <title>Mutants in the ptlA-H genes of Bordetella pertussis are deficient for pertussis toxin secretion.</title>
        <authorList>
            <person name="Craig-Mylius K.A."/>
            <person name="Weiss A.A."/>
        </authorList>
    </citation>
    <scope>FUNCTION</scope>
    <source>
        <strain>Tohama I / BP338</strain>
    </source>
</reference>
<reference key="7">
    <citation type="journal article" date="2004" name="Infect. Immun.">
        <title>Analysis of subassemblies of pertussis toxin subunits in vivo and their interaction with the ptl transport apparatus.</title>
        <authorList>
            <person name="Burns D.L."/>
            <person name="Fiddner S."/>
            <person name="Cheung A.M."/>
            <person name="Verma A."/>
        </authorList>
    </citation>
    <scope>FUNCTION</scope>
    <source>
        <strain>Tohama I / BP338</strain>
    </source>
</reference>
<organism>
    <name type="scientific">Bordetella pertussis (strain Tohama I / ATCC BAA-589 / NCTC 13251)</name>
    <dbReference type="NCBI Taxonomy" id="257313"/>
    <lineage>
        <taxon>Bacteria</taxon>
        <taxon>Pseudomonadati</taxon>
        <taxon>Pseudomonadota</taxon>
        <taxon>Betaproteobacteria</taxon>
        <taxon>Burkholderiales</taxon>
        <taxon>Alcaligenaceae</taxon>
        <taxon>Bordetella</taxon>
    </lineage>
</organism>
<dbReference type="EMBL" id="L10720">
    <property type="status" value="NOT_ANNOTATED_CDS"/>
    <property type="molecule type" value="Genomic_DNA"/>
</dbReference>
<dbReference type="EMBL" id="BX640422">
    <property type="protein sequence ID" value="CAE44047.1"/>
    <property type="molecule type" value="Genomic_DNA"/>
</dbReference>
<dbReference type="RefSeq" id="NP_882291.1">
    <property type="nucleotide sequence ID" value="NC_002929.2"/>
</dbReference>
<dbReference type="RefSeq" id="WP_010929497.1">
    <property type="nucleotide sequence ID" value="NZ_CP039022.1"/>
</dbReference>
<dbReference type="STRING" id="257313.BP3792"/>
<dbReference type="PaxDb" id="257313-BP3792"/>
<dbReference type="GeneID" id="93206111"/>
<dbReference type="KEGG" id="bpe:BP3792"/>
<dbReference type="PATRIC" id="fig|257313.5.peg.4096"/>
<dbReference type="HOGENOM" id="CLU_2913301_0_0_4"/>
<dbReference type="Proteomes" id="UP000002676">
    <property type="component" value="Chromosome"/>
</dbReference>